<name>G3P2_SCHPO</name>
<evidence type="ECO:0000250" key="1"/>
<evidence type="ECO:0000255" key="2">
    <source>
        <dbReference type="PROSITE-ProRule" id="PRU10009"/>
    </source>
</evidence>
<evidence type="ECO:0000269" key="3">
    <source>
    </source>
</evidence>
<evidence type="ECO:0000305" key="4"/>
<dbReference type="EC" id="1.2.1.12"/>
<dbReference type="EMBL" id="CU329671">
    <property type="protein sequence ID" value="CAA17812.1"/>
    <property type="molecule type" value="Genomic_DNA"/>
</dbReference>
<dbReference type="PIR" id="T40292">
    <property type="entry name" value="T40292"/>
</dbReference>
<dbReference type="RefSeq" id="NP_595236.1">
    <property type="nucleotide sequence ID" value="NM_001021142.2"/>
</dbReference>
<dbReference type="SMR" id="O43026"/>
<dbReference type="BioGRID" id="277491">
    <property type="interactions" value="68"/>
</dbReference>
<dbReference type="FunCoup" id="O43026">
    <property type="interactions" value="279"/>
</dbReference>
<dbReference type="MINT" id="O43026"/>
<dbReference type="STRING" id="284812.O43026"/>
<dbReference type="iPTMnet" id="O43026"/>
<dbReference type="PaxDb" id="4896-SPBC354.12.1"/>
<dbReference type="EnsemblFungi" id="SPBC354.12.1">
    <property type="protein sequence ID" value="SPBC354.12.1:pep"/>
    <property type="gene ID" value="SPBC354.12"/>
</dbReference>
<dbReference type="PomBase" id="SPBC354.12">
    <property type="gene designation" value="gpd3"/>
</dbReference>
<dbReference type="VEuPathDB" id="FungiDB:SPBC354.12"/>
<dbReference type="eggNOG" id="KOG0657">
    <property type="taxonomic scope" value="Eukaryota"/>
</dbReference>
<dbReference type="HOGENOM" id="CLU_030140_0_3_1"/>
<dbReference type="InParanoid" id="O43026"/>
<dbReference type="OMA" id="TCQMIRL"/>
<dbReference type="PhylomeDB" id="O43026"/>
<dbReference type="Reactome" id="R-SPO-70171">
    <property type="pathway name" value="Glycolysis"/>
</dbReference>
<dbReference type="Reactome" id="R-SPO-70263">
    <property type="pathway name" value="Gluconeogenesis"/>
</dbReference>
<dbReference type="UniPathway" id="UPA00109">
    <property type="reaction ID" value="UER00184"/>
</dbReference>
<dbReference type="PRO" id="PR:O43026"/>
<dbReference type="Proteomes" id="UP000002485">
    <property type="component" value="Chromosome II"/>
</dbReference>
<dbReference type="GO" id="GO:0005829">
    <property type="term" value="C:cytosol"/>
    <property type="evidence" value="ECO:0007005"/>
    <property type="project" value="PomBase"/>
</dbReference>
<dbReference type="GO" id="GO:0004365">
    <property type="term" value="F:glyceraldehyde-3-phosphate dehydrogenase (NAD+) (phosphorylating) activity"/>
    <property type="evidence" value="ECO:0000318"/>
    <property type="project" value="GO_Central"/>
</dbReference>
<dbReference type="GO" id="GO:0051287">
    <property type="term" value="F:NAD binding"/>
    <property type="evidence" value="ECO:0007669"/>
    <property type="project" value="InterPro"/>
</dbReference>
<dbReference type="GO" id="GO:0050661">
    <property type="term" value="F:NADP binding"/>
    <property type="evidence" value="ECO:0007669"/>
    <property type="project" value="InterPro"/>
</dbReference>
<dbReference type="GO" id="GO:0061621">
    <property type="term" value="P:canonical glycolysis"/>
    <property type="evidence" value="ECO:0000266"/>
    <property type="project" value="PomBase"/>
</dbReference>
<dbReference type="GO" id="GO:0006096">
    <property type="term" value="P:glycolytic process"/>
    <property type="evidence" value="ECO:0000318"/>
    <property type="project" value="GO_Central"/>
</dbReference>
<dbReference type="CDD" id="cd18126">
    <property type="entry name" value="GAPDH_I_C"/>
    <property type="match status" value="1"/>
</dbReference>
<dbReference type="CDD" id="cd05214">
    <property type="entry name" value="GAPDH_I_N"/>
    <property type="match status" value="1"/>
</dbReference>
<dbReference type="FunFam" id="3.30.360.10:FF:000001">
    <property type="entry name" value="Glyceraldehyde-3-phosphate dehydrogenase"/>
    <property type="match status" value="1"/>
</dbReference>
<dbReference type="FunFam" id="3.40.50.720:FF:000266">
    <property type="entry name" value="Glyceraldehyde-3-phosphate dehydrogenase"/>
    <property type="match status" value="1"/>
</dbReference>
<dbReference type="Gene3D" id="3.30.360.10">
    <property type="entry name" value="Dihydrodipicolinate Reductase, domain 2"/>
    <property type="match status" value="1"/>
</dbReference>
<dbReference type="Gene3D" id="3.40.50.720">
    <property type="entry name" value="NAD(P)-binding Rossmann-like Domain"/>
    <property type="match status" value="1"/>
</dbReference>
<dbReference type="InterPro" id="IPR020831">
    <property type="entry name" value="GlycerAld/Erythrose_P_DH"/>
</dbReference>
<dbReference type="InterPro" id="IPR020830">
    <property type="entry name" value="GlycerAld_3-P_DH_AS"/>
</dbReference>
<dbReference type="InterPro" id="IPR020829">
    <property type="entry name" value="GlycerAld_3-P_DH_cat"/>
</dbReference>
<dbReference type="InterPro" id="IPR020828">
    <property type="entry name" value="GlycerAld_3-P_DH_NAD(P)-bd"/>
</dbReference>
<dbReference type="InterPro" id="IPR006424">
    <property type="entry name" value="Glyceraldehyde-3-P_DH_1"/>
</dbReference>
<dbReference type="InterPro" id="IPR036291">
    <property type="entry name" value="NAD(P)-bd_dom_sf"/>
</dbReference>
<dbReference type="NCBIfam" id="TIGR01534">
    <property type="entry name" value="GAPDH-I"/>
    <property type="match status" value="1"/>
</dbReference>
<dbReference type="PANTHER" id="PTHR10836">
    <property type="entry name" value="GLYCERALDEHYDE 3-PHOSPHATE DEHYDROGENASE"/>
    <property type="match status" value="1"/>
</dbReference>
<dbReference type="PANTHER" id="PTHR10836:SF76">
    <property type="entry name" value="GLYCERALDEHYDE-3-PHOSPHATE DEHYDROGENASE-RELATED"/>
    <property type="match status" value="1"/>
</dbReference>
<dbReference type="Pfam" id="PF02800">
    <property type="entry name" value="Gp_dh_C"/>
    <property type="match status" value="1"/>
</dbReference>
<dbReference type="Pfam" id="PF00044">
    <property type="entry name" value="Gp_dh_N"/>
    <property type="match status" value="1"/>
</dbReference>
<dbReference type="PIRSF" id="PIRSF000149">
    <property type="entry name" value="GAP_DH"/>
    <property type="match status" value="1"/>
</dbReference>
<dbReference type="PRINTS" id="PR00078">
    <property type="entry name" value="G3PDHDRGNASE"/>
</dbReference>
<dbReference type="SMART" id="SM00846">
    <property type="entry name" value="Gp_dh_N"/>
    <property type="match status" value="1"/>
</dbReference>
<dbReference type="SUPFAM" id="SSF55347">
    <property type="entry name" value="Glyceraldehyde-3-phosphate dehydrogenase-like, C-terminal domain"/>
    <property type="match status" value="1"/>
</dbReference>
<dbReference type="SUPFAM" id="SSF51735">
    <property type="entry name" value="NAD(P)-binding Rossmann-fold domains"/>
    <property type="match status" value="1"/>
</dbReference>
<dbReference type="PROSITE" id="PS00071">
    <property type="entry name" value="GAPDH"/>
    <property type="match status" value="1"/>
</dbReference>
<gene>
    <name type="primary">gpd3</name>
    <name type="ORF">SPBC354.12</name>
</gene>
<keyword id="KW-0963">Cytoplasm</keyword>
<keyword id="KW-0324">Glycolysis</keyword>
<keyword id="KW-0520">NAD</keyword>
<keyword id="KW-0560">Oxidoreductase</keyword>
<keyword id="KW-0597">Phosphoprotein</keyword>
<keyword id="KW-1185">Reference proteome</keyword>
<proteinExistence type="evidence at protein level"/>
<accession>O43026</accession>
<organism>
    <name type="scientific">Schizosaccharomyces pombe (strain 972 / ATCC 24843)</name>
    <name type="common">Fission yeast</name>
    <dbReference type="NCBI Taxonomy" id="284812"/>
    <lineage>
        <taxon>Eukaryota</taxon>
        <taxon>Fungi</taxon>
        <taxon>Dikarya</taxon>
        <taxon>Ascomycota</taxon>
        <taxon>Taphrinomycotina</taxon>
        <taxon>Schizosaccharomycetes</taxon>
        <taxon>Schizosaccharomycetales</taxon>
        <taxon>Schizosaccharomycetaceae</taxon>
        <taxon>Schizosaccharomyces</taxon>
    </lineage>
</organism>
<reference key="1">
    <citation type="journal article" date="2002" name="Nature">
        <title>The genome sequence of Schizosaccharomyces pombe.</title>
        <authorList>
            <person name="Wood V."/>
            <person name="Gwilliam R."/>
            <person name="Rajandream M.A."/>
            <person name="Lyne M.H."/>
            <person name="Lyne R."/>
            <person name="Stewart A."/>
            <person name="Sgouros J.G."/>
            <person name="Peat N."/>
            <person name="Hayles J."/>
            <person name="Baker S.G."/>
            <person name="Basham D."/>
            <person name="Bowman S."/>
            <person name="Brooks K."/>
            <person name="Brown D."/>
            <person name="Brown S."/>
            <person name="Chillingworth T."/>
            <person name="Churcher C.M."/>
            <person name="Collins M."/>
            <person name="Connor R."/>
            <person name="Cronin A."/>
            <person name="Davis P."/>
            <person name="Feltwell T."/>
            <person name="Fraser A."/>
            <person name="Gentles S."/>
            <person name="Goble A."/>
            <person name="Hamlin N."/>
            <person name="Harris D.E."/>
            <person name="Hidalgo J."/>
            <person name="Hodgson G."/>
            <person name="Holroyd S."/>
            <person name="Hornsby T."/>
            <person name="Howarth S."/>
            <person name="Huckle E.J."/>
            <person name="Hunt S."/>
            <person name="Jagels K."/>
            <person name="James K.D."/>
            <person name="Jones L."/>
            <person name="Jones M."/>
            <person name="Leather S."/>
            <person name="McDonald S."/>
            <person name="McLean J."/>
            <person name="Mooney P."/>
            <person name="Moule S."/>
            <person name="Mungall K.L."/>
            <person name="Murphy L.D."/>
            <person name="Niblett D."/>
            <person name="Odell C."/>
            <person name="Oliver K."/>
            <person name="O'Neil S."/>
            <person name="Pearson D."/>
            <person name="Quail M.A."/>
            <person name="Rabbinowitsch E."/>
            <person name="Rutherford K.M."/>
            <person name="Rutter S."/>
            <person name="Saunders D."/>
            <person name="Seeger K."/>
            <person name="Sharp S."/>
            <person name="Skelton J."/>
            <person name="Simmonds M.N."/>
            <person name="Squares R."/>
            <person name="Squares S."/>
            <person name="Stevens K."/>
            <person name="Taylor K."/>
            <person name="Taylor R.G."/>
            <person name="Tivey A."/>
            <person name="Walsh S.V."/>
            <person name="Warren T."/>
            <person name="Whitehead S."/>
            <person name="Woodward J.R."/>
            <person name="Volckaert G."/>
            <person name="Aert R."/>
            <person name="Robben J."/>
            <person name="Grymonprez B."/>
            <person name="Weltjens I."/>
            <person name="Vanstreels E."/>
            <person name="Rieger M."/>
            <person name="Schaefer M."/>
            <person name="Mueller-Auer S."/>
            <person name="Gabel C."/>
            <person name="Fuchs M."/>
            <person name="Duesterhoeft A."/>
            <person name="Fritzc C."/>
            <person name="Holzer E."/>
            <person name="Moestl D."/>
            <person name="Hilbert H."/>
            <person name="Borzym K."/>
            <person name="Langer I."/>
            <person name="Beck A."/>
            <person name="Lehrach H."/>
            <person name="Reinhardt R."/>
            <person name="Pohl T.M."/>
            <person name="Eger P."/>
            <person name="Zimmermann W."/>
            <person name="Wedler H."/>
            <person name="Wambutt R."/>
            <person name="Purnelle B."/>
            <person name="Goffeau A."/>
            <person name="Cadieu E."/>
            <person name="Dreano S."/>
            <person name="Gloux S."/>
            <person name="Lelaure V."/>
            <person name="Mottier S."/>
            <person name="Galibert F."/>
            <person name="Aves S.J."/>
            <person name="Xiang Z."/>
            <person name="Hunt C."/>
            <person name="Moore K."/>
            <person name="Hurst S.M."/>
            <person name="Lucas M."/>
            <person name="Rochet M."/>
            <person name="Gaillardin C."/>
            <person name="Tallada V.A."/>
            <person name="Garzon A."/>
            <person name="Thode G."/>
            <person name="Daga R.R."/>
            <person name="Cruzado L."/>
            <person name="Jimenez J."/>
            <person name="Sanchez M."/>
            <person name="del Rey F."/>
            <person name="Benito J."/>
            <person name="Dominguez A."/>
            <person name="Revuelta J.L."/>
            <person name="Moreno S."/>
            <person name="Armstrong J."/>
            <person name="Forsburg S.L."/>
            <person name="Cerutti L."/>
            <person name="Lowe T."/>
            <person name="McCombie W.R."/>
            <person name="Paulsen I."/>
            <person name="Potashkin J."/>
            <person name="Shpakovski G.V."/>
            <person name="Ussery D."/>
            <person name="Barrell B.G."/>
            <person name="Nurse P."/>
        </authorList>
    </citation>
    <scope>NUCLEOTIDE SEQUENCE [LARGE SCALE GENOMIC DNA]</scope>
    <source>
        <strain>972 / ATCC 24843</strain>
    </source>
</reference>
<reference key="2">
    <citation type="journal article" date="2008" name="J. Proteome Res.">
        <title>Phosphoproteome analysis of fission yeast.</title>
        <authorList>
            <person name="Wilson-Grady J.T."/>
            <person name="Villen J."/>
            <person name="Gygi S.P."/>
        </authorList>
    </citation>
    <scope>PHOSPHORYLATION [LARGE SCALE ANALYSIS] AT SER-125; SER-151; THR-153; THR-154; THR-182; THR-184; SER-192; SER-203; SER-209; THR-211; THR-237 AND SER-241</scope>
    <scope>IDENTIFICATION BY MASS SPECTROMETRY</scope>
</reference>
<protein>
    <recommendedName>
        <fullName>Glyceraldehyde-3-phosphate dehydrogenase 2</fullName>
        <shortName>GAPDH 2</shortName>
        <ecNumber>1.2.1.12</ecNumber>
    </recommendedName>
</protein>
<feature type="chain" id="PRO_0000145581" description="Glyceraldehyde-3-phosphate dehydrogenase 2">
    <location>
        <begin position="1"/>
        <end position="335"/>
    </location>
</feature>
<feature type="active site" description="Nucleophile" evidence="2">
    <location>
        <position position="152"/>
    </location>
</feature>
<feature type="binding site" evidence="1">
    <location>
        <begin position="13"/>
        <end position="14"/>
    </location>
    <ligand>
        <name>NAD(+)</name>
        <dbReference type="ChEBI" id="CHEBI:57540"/>
    </ligand>
</feature>
<feature type="binding site" evidence="1">
    <location>
        <position position="35"/>
    </location>
    <ligand>
        <name>NAD(+)</name>
        <dbReference type="ChEBI" id="CHEBI:57540"/>
    </ligand>
</feature>
<feature type="binding site" evidence="1">
    <location>
        <position position="80"/>
    </location>
    <ligand>
        <name>NAD(+)</name>
        <dbReference type="ChEBI" id="CHEBI:57540"/>
    </ligand>
</feature>
<feature type="binding site" evidence="1">
    <location>
        <begin position="151"/>
        <end position="153"/>
    </location>
    <ligand>
        <name>D-glyceraldehyde 3-phosphate</name>
        <dbReference type="ChEBI" id="CHEBI:59776"/>
    </ligand>
</feature>
<feature type="binding site" evidence="1">
    <location>
        <position position="182"/>
    </location>
    <ligand>
        <name>D-glyceraldehyde 3-phosphate</name>
        <dbReference type="ChEBI" id="CHEBI:59776"/>
    </ligand>
</feature>
<feature type="binding site" evidence="1">
    <location>
        <begin position="211"/>
        <end position="212"/>
    </location>
    <ligand>
        <name>D-glyceraldehyde 3-phosphate</name>
        <dbReference type="ChEBI" id="CHEBI:59776"/>
    </ligand>
</feature>
<feature type="binding site" evidence="1">
    <location>
        <position position="234"/>
    </location>
    <ligand>
        <name>D-glyceraldehyde 3-phosphate</name>
        <dbReference type="ChEBI" id="CHEBI:59776"/>
    </ligand>
</feature>
<feature type="binding site" evidence="1">
    <location>
        <position position="316"/>
    </location>
    <ligand>
        <name>NAD(+)</name>
        <dbReference type="ChEBI" id="CHEBI:57540"/>
    </ligand>
</feature>
<feature type="site" description="Activates thiol group during catalysis" evidence="1">
    <location>
        <position position="179"/>
    </location>
</feature>
<feature type="modified residue" description="Phosphoserine" evidence="3">
    <location>
        <position position="125"/>
    </location>
</feature>
<feature type="modified residue" description="Phosphoserine" evidence="3">
    <location>
        <position position="151"/>
    </location>
</feature>
<feature type="modified residue" description="Phosphothreonine" evidence="3">
    <location>
        <position position="153"/>
    </location>
</feature>
<feature type="modified residue" description="Phosphothreonine" evidence="3">
    <location>
        <position position="154"/>
    </location>
</feature>
<feature type="modified residue" description="Phosphothreonine" evidence="3">
    <location>
        <position position="182"/>
    </location>
</feature>
<feature type="modified residue" description="Phosphothreonine" evidence="3">
    <location>
        <position position="184"/>
    </location>
</feature>
<feature type="modified residue" description="Phosphoserine" evidence="3">
    <location>
        <position position="192"/>
    </location>
</feature>
<feature type="modified residue" description="Phosphoserine" evidence="3">
    <location>
        <position position="203"/>
    </location>
</feature>
<feature type="modified residue" description="Phosphoserine" evidence="3">
    <location>
        <position position="209"/>
    </location>
</feature>
<feature type="modified residue" description="Phosphothreonine" evidence="3">
    <location>
        <position position="211"/>
    </location>
</feature>
<feature type="modified residue" description="Phosphothreonine" evidence="3">
    <location>
        <position position="237"/>
    </location>
</feature>
<feature type="modified residue" description="Phosphoserine" evidence="3">
    <location>
        <position position="241"/>
    </location>
</feature>
<sequence length="335" mass="35675">MAIPKVGINGFGRIGRIVLRNAILTGKIQVVAVNDPFIDLDYMAYMFKYDSTHGRFEGSVETKGGKLVIDGHSIDVHNERDPANIKWSASGAEYVIESTGVFTTKETASAHLKGGAKRVIISAPSKDAPMFVVGVNLEKFNPSEKVISNASCTTNCLAPLAKVINDTFGIEEGLMTTVHATTATQKTVDGPSKKDWRGGRGASANIIPSSTGAAKAVGKVIPALNGKLTGMAFRVPTPDVSVVDLTVKLAKPTNYEDIKAAIKAASEGPMKGVLGYTEDSVVSTDFCGDNHSSIFDASAGIQLSPQFVKLVSWYDNEWGYSHRVVDLVAYTASKD</sequence>
<comment type="catalytic activity">
    <reaction evidence="2">
        <text>D-glyceraldehyde 3-phosphate + phosphate + NAD(+) = (2R)-3-phospho-glyceroyl phosphate + NADH + H(+)</text>
        <dbReference type="Rhea" id="RHEA:10300"/>
        <dbReference type="ChEBI" id="CHEBI:15378"/>
        <dbReference type="ChEBI" id="CHEBI:43474"/>
        <dbReference type="ChEBI" id="CHEBI:57540"/>
        <dbReference type="ChEBI" id="CHEBI:57604"/>
        <dbReference type="ChEBI" id="CHEBI:57945"/>
        <dbReference type="ChEBI" id="CHEBI:59776"/>
        <dbReference type="EC" id="1.2.1.12"/>
    </reaction>
</comment>
<comment type="pathway">
    <text>Carbohydrate degradation; glycolysis; pyruvate from D-glyceraldehyde 3-phosphate: step 1/5.</text>
</comment>
<comment type="subunit">
    <text evidence="1">Homotetramer.</text>
</comment>
<comment type="subcellular location">
    <subcellularLocation>
        <location evidence="1">Cytoplasm</location>
    </subcellularLocation>
</comment>
<comment type="similarity">
    <text evidence="4">Belongs to the glyceraldehyde-3-phosphate dehydrogenase family.</text>
</comment>